<keyword id="KW-0143">Chaperone</keyword>
<keyword id="KW-0963">Cytoplasm</keyword>
<keyword id="KW-1185">Reference proteome</keyword>
<keyword id="KW-0346">Stress response</keyword>
<proteinExistence type="inferred from homology"/>
<organism>
    <name type="scientific">Escherichia coli O45:K1 (strain S88 / ExPEC)</name>
    <dbReference type="NCBI Taxonomy" id="585035"/>
    <lineage>
        <taxon>Bacteria</taxon>
        <taxon>Pseudomonadati</taxon>
        <taxon>Pseudomonadota</taxon>
        <taxon>Gammaproteobacteria</taxon>
        <taxon>Enterobacterales</taxon>
        <taxon>Enterobacteriaceae</taxon>
        <taxon>Escherichia</taxon>
    </lineage>
</organism>
<accession>B7MIV1</accession>
<evidence type="ECO:0000255" key="1">
    <source>
        <dbReference type="HAMAP-Rule" id="MF_01151"/>
    </source>
</evidence>
<evidence type="ECO:0000256" key="2">
    <source>
        <dbReference type="SAM" id="MobiDB-lite"/>
    </source>
</evidence>
<gene>
    <name evidence="1" type="primary">grpE</name>
    <name type="ordered locus">ECS88_2799</name>
</gene>
<comment type="function">
    <text evidence="1">Participates actively in the response to hyperosmotic and heat shock by preventing the aggregation of stress-denatured proteins, in association with DnaK and GrpE. It is the nucleotide exchange factor for DnaK and may function as a thermosensor. Unfolded proteins bind initially to DnaJ; upon interaction with the DnaJ-bound protein, DnaK hydrolyzes its bound ATP, resulting in the formation of a stable complex. GrpE releases ADP from DnaK; ATP binding to DnaK triggers the release of the substrate protein, thus completing the reaction cycle. Several rounds of ATP-dependent interactions between DnaJ, DnaK and GrpE are required for fully efficient folding.</text>
</comment>
<comment type="subunit">
    <text evidence="1">Homodimer.</text>
</comment>
<comment type="subcellular location">
    <subcellularLocation>
        <location evidence="1">Cytoplasm</location>
    </subcellularLocation>
</comment>
<comment type="similarity">
    <text evidence="1">Belongs to the GrpE family.</text>
</comment>
<dbReference type="EMBL" id="CU928161">
    <property type="protein sequence ID" value="CAR04053.1"/>
    <property type="molecule type" value="Genomic_DNA"/>
</dbReference>
<dbReference type="RefSeq" id="WP_001332400.1">
    <property type="nucleotide sequence ID" value="NC_011742.1"/>
</dbReference>
<dbReference type="SMR" id="B7MIV1"/>
<dbReference type="KEGG" id="ecz:ECS88_2799"/>
<dbReference type="HOGENOM" id="CLU_057217_6_0_6"/>
<dbReference type="Proteomes" id="UP000000747">
    <property type="component" value="Chromosome"/>
</dbReference>
<dbReference type="GO" id="GO:0005829">
    <property type="term" value="C:cytosol"/>
    <property type="evidence" value="ECO:0007669"/>
    <property type="project" value="TreeGrafter"/>
</dbReference>
<dbReference type="GO" id="GO:0000774">
    <property type="term" value="F:adenyl-nucleotide exchange factor activity"/>
    <property type="evidence" value="ECO:0007669"/>
    <property type="project" value="InterPro"/>
</dbReference>
<dbReference type="GO" id="GO:0042803">
    <property type="term" value="F:protein homodimerization activity"/>
    <property type="evidence" value="ECO:0007669"/>
    <property type="project" value="InterPro"/>
</dbReference>
<dbReference type="GO" id="GO:0051087">
    <property type="term" value="F:protein-folding chaperone binding"/>
    <property type="evidence" value="ECO:0007669"/>
    <property type="project" value="InterPro"/>
</dbReference>
<dbReference type="GO" id="GO:0051082">
    <property type="term" value="F:unfolded protein binding"/>
    <property type="evidence" value="ECO:0007669"/>
    <property type="project" value="TreeGrafter"/>
</dbReference>
<dbReference type="GO" id="GO:0006457">
    <property type="term" value="P:protein folding"/>
    <property type="evidence" value="ECO:0007669"/>
    <property type="project" value="InterPro"/>
</dbReference>
<dbReference type="CDD" id="cd00446">
    <property type="entry name" value="GrpE"/>
    <property type="match status" value="1"/>
</dbReference>
<dbReference type="FunFam" id="2.30.22.10:FF:000001">
    <property type="entry name" value="Protein GrpE"/>
    <property type="match status" value="1"/>
</dbReference>
<dbReference type="FunFam" id="3.90.20.20:FF:000001">
    <property type="entry name" value="Protein GrpE"/>
    <property type="match status" value="1"/>
</dbReference>
<dbReference type="Gene3D" id="3.90.20.20">
    <property type="match status" value="1"/>
</dbReference>
<dbReference type="Gene3D" id="2.30.22.10">
    <property type="entry name" value="Head domain of nucleotide exchange factor GrpE"/>
    <property type="match status" value="1"/>
</dbReference>
<dbReference type="HAMAP" id="MF_01151">
    <property type="entry name" value="GrpE"/>
    <property type="match status" value="1"/>
</dbReference>
<dbReference type="InterPro" id="IPR000740">
    <property type="entry name" value="GrpE"/>
</dbReference>
<dbReference type="InterPro" id="IPR013805">
    <property type="entry name" value="GrpE_coiled_coil"/>
</dbReference>
<dbReference type="InterPro" id="IPR009012">
    <property type="entry name" value="GrpE_head"/>
</dbReference>
<dbReference type="NCBIfam" id="NF007655">
    <property type="entry name" value="PRK10325.1"/>
    <property type="match status" value="1"/>
</dbReference>
<dbReference type="NCBIfam" id="NF010738">
    <property type="entry name" value="PRK14140.1"/>
    <property type="match status" value="1"/>
</dbReference>
<dbReference type="NCBIfam" id="NF010748">
    <property type="entry name" value="PRK14150.1"/>
    <property type="match status" value="1"/>
</dbReference>
<dbReference type="PANTHER" id="PTHR21237">
    <property type="entry name" value="GRPE PROTEIN"/>
    <property type="match status" value="1"/>
</dbReference>
<dbReference type="PANTHER" id="PTHR21237:SF23">
    <property type="entry name" value="GRPE PROTEIN HOMOLOG, MITOCHONDRIAL"/>
    <property type="match status" value="1"/>
</dbReference>
<dbReference type="Pfam" id="PF01025">
    <property type="entry name" value="GrpE"/>
    <property type="match status" value="1"/>
</dbReference>
<dbReference type="PRINTS" id="PR00773">
    <property type="entry name" value="GRPEPROTEIN"/>
</dbReference>
<dbReference type="SUPFAM" id="SSF58014">
    <property type="entry name" value="Coiled-coil domain of nucleotide exchange factor GrpE"/>
    <property type="match status" value="1"/>
</dbReference>
<dbReference type="SUPFAM" id="SSF51064">
    <property type="entry name" value="Head domain of nucleotide exchange factor GrpE"/>
    <property type="match status" value="1"/>
</dbReference>
<dbReference type="PROSITE" id="PS01071">
    <property type="entry name" value="GRPE"/>
    <property type="match status" value="1"/>
</dbReference>
<sequence>MSSKEQKTPEGQAPEEIIMDQHEEIEAVEPEASAEQVDPRDEKIANLEAQLAEAQTRERDGILRVKAEMENLRRRTELDIEKAHKFALEKFINELLPVIDSLDRALEVADKANPDMSAMVEGIELTLKSMLDVVRKFGVEVIAETNVPLDPNVHQAIAMVESDDVAPGNVLGIMQKGYTLNGRTIRAAMVTVAKAKD</sequence>
<feature type="chain" id="PRO_1000137560" description="Protein GrpE">
    <location>
        <begin position="1"/>
        <end position="197"/>
    </location>
</feature>
<feature type="region of interest" description="Disordered" evidence="2">
    <location>
        <begin position="1"/>
        <end position="39"/>
    </location>
</feature>
<name>GRPE_ECO45</name>
<protein>
    <recommendedName>
        <fullName evidence="1">Protein GrpE</fullName>
    </recommendedName>
    <alternativeName>
        <fullName evidence="1">HSP-70 cofactor</fullName>
    </alternativeName>
</protein>
<reference key="1">
    <citation type="journal article" date="2009" name="PLoS Genet.">
        <title>Organised genome dynamics in the Escherichia coli species results in highly diverse adaptive paths.</title>
        <authorList>
            <person name="Touchon M."/>
            <person name="Hoede C."/>
            <person name="Tenaillon O."/>
            <person name="Barbe V."/>
            <person name="Baeriswyl S."/>
            <person name="Bidet P."/>
            <person name="Bingen E."/>
            <person name="Bonacorsi S."/>
            <person name="Bouchier C."/>
            <person name="Bouvet O."/>
            <person name="Calteau A."/>
            <person name="Chiapello H."/>
            <person name="Clermont O."/>
            <person name="Cruveiller S."/>
            <person name="Danchin A."/>
            <person name="Diard M."/>
            <person name="Dossat C."/>
            <person name="Karoui M.E."/>
            <person name="Frapy E."/>
            <person name="Garry L."/>
            <person name="Ghigo J.M."/>
            <person name="Gilles A.M."/>
            <person name="Johnson J."/>
            <person name="Le Bouguenec C."/>
            <person name="Lescat M."/>
            <person name="Mangenot S."/>
            <person name="Martinez-Jehanne V."/>
            <person name="Matic I."/>
            <person name="Nassif X."/>
            <person name="Oztas S."/>
            <person name="Petit M.A."/>
            <person name="Pichon C."/>
            <person name="Rouy Z."/>
            <person name="Ruf C.S."/>
            <person name="Schneider D."/>
            <person name="Tourret J."/>
            <person name="Vacherie B."/>
            <person name="Vallenet D."/>
            <person name="Medigue C."/>
            <person name="Rocha E.P.C."/>
            <person name="Denamur E."/>
        </authorList>
    </citation>
    <scope>NUCLEOTIDE SEQUENCE [LARGE SCALE GENOMIC DNA]</scope>
    <source>
        <strain>S88 / ExPEC</strain>
    </source>
</reference>